<keyword id="KW-0903">Direct protein sequencing</keyword>
<keyword id="KW-0382">Hypotensive agent</keyword>
<keyword id="KW-0481">Metalloenzyme inhibitor</keyword>
<keyword id="KW-0483">Metalloprotease inhibitor</keyword>
<keyword id="KW-0646">Protease inhibitor</keyword>
<keyword id="KW-0873">Pyrrolidone carboxylic acid</keyword>
<keyword id="KW-0964">Secreted</keyword>
<keyword id="KW-0800">Toxin</keyword>
<evidence type="ECO:0000250" key="1"/>
<evidence type="ECO:0000269" key="2">
    <source ref="1"/>
</evidence>
<evidence type="ECO:0000303" key="3">
    <source ref="1"/>
</evidence>
<evidence type="ECO:0000305" key="4"/>
<sequence>QQWPRDPAPIPP</sequence>
<accession>P86721</accession>
<feature type="peptide" id="PRO_0000399055" description="Bradykinin-potentiating peptide 12a">
    <location>
        <begin position="1"/>
        <end position="12"/>
    </location>
</feature>
<feature type="modified residue" description="Pyrrolidone carboxylic acid" evidence="2">
    <location>
        <position position="1"/>
    </location>
</feature>
<comment type="function">
    <text evidence="1">This peptide both inhibits the activity of the angiotensin-converting enzyme (ACE) and enhances the action of bradykinin by inhibiting the peptidases that inactivate it. It acts as an indirect hypotensive agent (By similarity).</text>
</comment>
<comment type="subcellular location">
    <subcellularLocation>
        <location evidence="2">Secreted</location>
    </subcellularLocation>
</comment>
<comment type="tissue specificity">
    <text evidence="2">Expressed by the venom gland.</text>
</comment>
<comment type="mass spectrometry"/>
<comment type="similarity">
    <text evidence="4">Belongs to the bradykinin-potentiating peptide family.</text>
</comment>
<name>BPP12_BOTAT</name>
<proteinExistence type="evidence at protein level"/>
<reference evidence="4" key="1">
    <citation type="submission" date="2010-07" db="UniProtKB">
        <title>Identification of peptides from Amazonian Bothrops atrox venom by MALDI TOF/TOF.</title>
        <authorList>
            <person name="Coutinho-Neto A."/>
            <person name="Cardozo-Filho J.L."/>
            <person name="Caldeira C.A.S."/>
            <person name="Silva L.P."/>
            <person name="Bloch C. Jr."/>
            <person name="Calderon L.A."/>
            <person name="Stabeli R.G."/>
        </authorList>
    </citation>
    <scope>PROTEIN SEQUENCE</scope>
    <scope>SUBCELLULAR LOCATION</scope>
    <scope>TISSUE SPECIFICITY</scope>
    <scope>MASS SPECTROMETRY</scope>
    <scope>PYROGLUTAMATE FORMATION AT GLN-1</scope>
    <source>
        <tissue evidence="2">Venom</tissue>
    </source>
</reference>
<dbReference type="GO" id="GO:0005576">
    <property type="term" value="C:extracellular region"/>
    <property type="evidence" value="ECO:0007669"/>
    <property type="project" value="UniProtKB-SubCell"/>
</dbReference>
<dbReference type="GO" id="GO:0030414">
    <property type="term" value="F:peptidase inhibitor activity"/>
    <property type="evidence" value="ECO:0007669"/>
    <property type="project" value="UniProtKB-KW"/>
</dbReference>
<dbReference type="GO" id="GO:0090729">
    <property type="term" value="F:toxin activity"/>
    <property type="evidence" value="ECO:0007669"/>
    <property type="project" value="UniProtKB-KW"/>
</dbReference>
<dbReference type="GO" id="GO:0008217">
    <property type="term" value="P:regulation of blood pressure"/>
    <property type="evidence" value="ECO:0007669"/>
    <property type="project" value="UniProtKB-KW"/>
</dbReference>
<protein>
    <recommendedName>
        <fullName>Bradykinin-potentiating peptide 12a</fullName>
        <shortName>BPP-12a</shortName>
    </recommendedName>
    <alternativeName>
        <fullName evidence="3">Bradykinin-potentiating peptide BAX12a</fullName>
    </alternativeName>
</protein>
<organism>
    <name type="scientific">Bothrops atrox</name>
    <name type="common">Barba amarilla</name>
    <name type="synonym">Fer-de-lance</name>
    <dbReference type="NCBI Taxonomy" id="8725"/>
    <lineage>
        <taxon>Eukaryota</taxon>
        <taxon>Metazoa</taxon>
        <taxon>Chordata</taxon>
        <taxon>Craniata</taxon>
        <taxon>Vertebrata</taxon>
        <taxon>Euteleostomi</taxon>
        <taxon>Lepidosauria</taxon>
        <taxon>Squamata</taxon>
        <taxon>Bifurcata</taxon>
        <taxon>Unidentata</taxon>
        <taxon>Episquamata</taxon>
        <taxon>Toxicofera</taxon>
        <taxon>Serpentes</taxon>
        <taxon>Colubroidea</taxon>
        <taxon>Viperidae</taxon>
        <taxon>Crotalinae</taxon>
        <taxon>Bothrops</taxon>
    </lineage>
</organism>